<organism>
    <name type="scientific">Phytophthora infestans (strain T30-4)</name>
    <name type="common">Potato late blight agent</name>
    <dbReference type="NCBI Taxonomy" id="403677"/>
    <lineage>
        <taxon>Eukaryota</taxon>
        <taxon>Sar</taxon>
        <taxon>Stramenopiles</taxon>
        <taxon>Oomycota</taxon>
        <taxon>Peronosporales</taxon>
        <taxon>Peronosporaceae</taxon>
        <taxon>Phytophthora</taxon>
    </lineage>
</organism>
<evidence type="ECO:0000255" key="1">
    <source>
        <dbReference type="HAMAP-Rule" id="MF_03140"/>
    </source>
</evidence>
<evidence type="ECO:0000256" key="2">
    <source>
        <dbReference type="SAM" id="MobiDB-lite"/>
    </source>
</evidence>
<protein>
    <recommendedName>
        <fullName evidence="1">Flap endonuclease 1</fullName>
        <shortName evidence="1">FEN-1</shortName>
        <ecNumber evidence="1">3.1.-.-</ecNumber>
    </recommendedName>
    <alternativeName>
        <fullName evidence="1">Flap structure-specific endonuclease 1</fullName>
    </alternativeName>
</protein>
<comment type="function">
    <text evidence="1">Structure-specific nuclease with 5'-flap endonuclease and 5'-3' exonuclease activities involved in DNA replication and repair. During DNA replication, cleaves the 5'-overhanging flap structure that is generated by displacement synthesis when DNA polymerase encounters the 5'-end of a downstream Okazaki fragment. It enters the flap from the 5'-end and then tracks to cleave the flap base, leaving a nick for ligation. Also involved in the long patch base excision repair (LP-BER) pathway, by cleaving within the apurinic/apyrimidinic (AP) site-terminated flap. Acts as a genome stabilization factor that prevents flaps from equilibrating into structures that lead to duplications and deletions. Also possesses 5'-3' exonuclease activity on nicked or gapped double-stranded DNA, and exhibits RNase H activity. Also involved in replication and repair of rDNA and in repairing mitochondrial DNA.</text>
</comment>
<comment type="cofactor">
    <cofactor evidence="1">
        <name>Mg(2+)</name>
        <dbReference type="ChEBI" id="CHEBI:18420"/>
    </cofactor>
    <text evidence="1">Binds 2 magnesium ions per subunit. They probably participate in the reaction catalyzed by the enzyme. May bind an additional third magnesium ion after substrate binding.</text>
</comment>
<comment type="subunit">
    <text evidence="1">Interacts with PCNA. Three molecules of FEN1 bind to one PCNA trimer with each molecule binding to one PCNA monomer. PCNA stimulates the nuclease activity without altering cleavage specificity.</text>
</comment>
<comment type="subcellular location">
    <subcellularLocation>
        <location evidence="1">Nucleus</location>
        <location evidence="1">Nucleolus</location>
    </subcellularLocation>
    <subcellularLocation>
        <location evidence="1">Nucleus</location>
        <location evidence="1">Nucleoplasm</location>
    </subcellularLocation>
    <subcellularLocation>
        <location evidence="1">Mitochondrion</location>
    </subcellularLocation>
    <text evidence="1">Resides mostly in the nucleoli and relocalizes to the nucleoplasm upon DNA damage.</text>
</comment>
<comment type="PTM">
    <text evidence="1">Phosphorylated. Phosphorylation upon DNA damage induces relocalization to the nuclear plasma.</text>
</comment>
<comment type="similarity">
    <text evidence="1">Belongs to the XPG/RAD2 endonuclease family. FEN1 subfamily.</text>
</comment>
<proteinExistence type="inferred from homology"/>
<keyword id="KW-0227">DNA damage</keyword>
<keyword id="KW-0234">DNA repair</keyword>
<keyword id="KW-0235">DNA replication</keyword>
<keyword id="KW-0255">Endonuclease</keyword>
<keyword id="KW-0269">Exonuclease</keyword>
<keyword id="KW-0378">Hydrolase</keyword>
<keyword id="KW-0460">Magnesium</keyword>
<keyword id="KW-0479">Metal-binding</keyword>
<keyword id="KW-0496">Mitochondrion</keyword>
<keyword id="KW-0540">Nuclease</keyword>
<keyword id="KW-0539">Nucleus</keyword>
<keyword id="KW-0597">Phosphoprotein</keyword>
<keyword id="KW-1185">Reference proteome</keyword>
<name>FEN1_PHYIT</name>
<gene>
    <name evidence="1" type="primary">FEN1</name>
    <name type="ORF">PITG_03624</name>
</gene>
<feature type="chain" id="PRO_0000403553" description="Flap endonuclease 1">
    <location>
        <begin position="1"/>
        <end position="389"/>
    </location>
</feature>
<feature type="region of interest" description="N-domain">
    <location>
        <begin position="1"/>
        <end position="110"/>
    </location>
</feature>
<feature type="region of interest" description="Disordered" evidence="2">
    <location>
        <begin position="103"/>
        <end position="124"/>
    </location>
</feature>
<feature type="region of interest" description="I-domain">
    <location>
        <begin position="128"/>
        <end position="259"/>
    </location>
</feature>
<feature type="region of interest" description="Interaction with PCNA" evidence="1">
    <location>
        <begin position="350"/>
        <end position="358"/>
    </location>
</feature>
<feature type="region of interest" description="Disordered" evidence="2">
    <location>
        <begin position="362"/>
        <end position="389"/>
    </location>
</feature>
<feature type="compositionally biased region" description="Basic residues" evidence="2">
    <location>
        <begin position="367"/>
        <end position="389"/>
    </location>
</feature>
<feature type="binding site" evidence="1">
    <location>
        <position position="35"/>
    </location>
    <ligand>
        <name>Mg(2+)</name>
        <dbReference type="ChEBI" id="CHEBI:18420"/>
        <label>1</label>
    </ligand>
</feature>
<feature type="binding site" evidence="1">
    <location>
        <position position="48"/>
    </location>
    <ligand>
        <name>DNA</name>
        <dbReference type="ChEBI" id="CHEBI:16991"/>
    </ligand>
</feature>
<feature type="binding site" evidence="1">
    <location>
        <position position="76"/>
    </location>
    <ligand>
        <name>DNA</name>
        <dbReference type="ChEBI" id="CHEBI:16991"/>
    </ligand>
</feature>
<feature type="binding site" evidence="1">
    <location>
        <position position="92"/>
    </location>
    <ligand>
        <name>Mg(2+)</name>
        <dbReference type="ChEBI" id="CHEBI:18420"/>
        <label>1</label>
    </ligand>
</feature>
<feature type="binding site" evidence="1">
    <location>
        <position position="164"/>
    </location>
    <ligand>
        <name>DNA</name>
        <dbReference type="ChEBI" id="CHEBI:16991"/>
    </ligand>
</feature>
<feature type="binding site" evidence="1">
    <location>
        <position position="164"/>
    </location>
    <ligand>
        <name>Mg(2+)</name>
        <dbReference type="ChEBI" id="CHEBI:18420"/>
        <label>1</label>
    </ligand>
</feature>
<feature type="binding site" evidence="1">
    <location>
        <position position="166"/>
    </location>
    <ligand>
        <name>Mg(2+)</name>
        <dbReference type="ChEBI" id="CHEBI:18420"/>
        <label>1</label>
    </ligand>
</feature>
<feature type="binding site" evidence="1">
    <location>
        <position position="185"/>
    </location>
    <ligand>
        <name>Mg(2+)</name>
        <dbReference type="ChEBI" id="CHEBI:18420"/>
        <label>2</label>
    </ligand>
</feature>
<feature type="binding site" evidence="1">
    <location>
        <position position="187"/>
    </location>
    <ligand>
        <name>Mg(2+)</name>
        <dbReference type="ChEBI" id="CHEBI:18420"/>
        <label>2</label>
    </ligand>
</feature>
<feature type="binding site" evidence="1">
    <location>
        <position position="237"/>
    </location>
    <ligand>
        <name>DNA</name>
        <dbReference type="ChEBI" id="CHEBI:16991"/>
    </ligand>
</feature>
<feature type="binding site" evidence="1">
    <location>
        <position position="239"/>
    </location>
    <ligand>
        <name>DNA</name>
        <dbReference type="ChEBI" id="CHEBI:16991"/>
    </ligand>
</feature>
<feature type="binding site" evidence="1">
    <location>
        <position position="239"/>
    </location>
    <ligand>
        <name>Mg(2+)</name>
        <dbReference type="ChEBI" id="CHEBI:18420"/>
        <label>2</label>
    </ligand>
</feature>
<reference key="1">
    <citation type="journal article" date="2009" name="Nature">
        <title>Genome sequence and analysis of the Irish potato famine pathogen Phytophthora infestans.</title>
        <authorList>
            <consortium name="The Broad Institute Genome Sequencing Platform"/>
            <person name="Haas B.J."/>
            <person name="Kamoun S."/>
            <person name="Zody M.C."/>
            <person name="Jiang R.H."/>
            <person name="Handsaker R.E."/>
            <person name="Cano L.M."/>
            <person name="Grabherr M."/>
            <person name="Kodira C.D."/>
            <person name="Raffaele S."/>
            <person name="Torto-Alalibo T."/>
            <person name="Bozkurt T.O."/>
            <person name="Ah-Fong A.M."/>
            <person name="Alvarado L."/>
            <person name="Anderson V.L."/>
            <person name="Armstrong M.R."/>
            <person name="Avrova A."/>
            <person name="Baxter L."/>
            <person name="Beynon J."/>
            <person name="Boevink P.C."/>
            <person name="Bollmann S.R."/>
            <person name="Bos J.I."/>
            <person name="Bulone V."/>
            <person name="Cai G."/>
            <person name="Cakir C."/>
            <person name="Carrington J.C."/>
            <person name="Chawner M."/>
            <person name="Conti L."/>
            <person name="Costanzo S."/>
            <person name="Ewan R."/>
            <person name="Fahlgren N."/>
            <person name="Fischbach M.A."/>
            <person name="Fugelstad J."/>
            <person name="Gilroy E.M."/>
            <person name="Gnerre S."/>
            <person name="Green P.J."/>
            <person name="Grenville-Briggs L.J."/>
            <person name="Griffith J."/>
            <person name="Grunwald N.J."/>
            <person name="Horn K."/>
            <person name="Horner N.R."/>
            <person name="Hu C.H."/>
            <person name="Huitema E."/>
            <person name="Jeong D.H."/>
            <person name="Jones A.M."/>
            <person name="Jones J.D."/>
            <person name="Jones R.W."/>
            <person name="Karlsson E.K."/>
            <person name="Kunjeti S.G."/>
            <person name="Lamour K."/>
            <person name="Liu Z."/>
            <person name="Ma L."/>
            <person name="Maclean D."/>
            <person name="Chibucos M.C."/>
            <person name="McDonald H."/>
            <person name="McWalters J."/>
            <person name="Meijer H.J."/>
            <person name="Morgan W."/>
            <person name="Morris P.F."/>
            <person name="Munro C.A."/>
            <person name="O'Neill K."/>
            <person name="Ospina-Giraldo M."/>
            <person name="Pinzon A."/>
            <person name="Pritchard L."/>
            <person name="Ramsahoye B."/>
            <person name="Ren Q."/>
            <person name="Restrepo S."/>
            <person name="Roy S."/>
            <person name="Sadanandom A."/>
            <person name="Savidor A."/>
            <person name="Schornack S."/>
            <person name="Schwartz D.C."/>
            <person name="Schumann U.D."/>
            <person name="Schwessinger B."/>
            <person name="Seyer L."/>
            <person name="Sharpe T."/>
            <person name="Silvar C."/>
            <person name="Song J."/>
            <person name="Studholme D.J."/>
            <person name="Sykes S."/>
            <person name="Thines M."/>
            <person name="van de Vondervoort P.J."/>
            <person name="Phuntumart V."/>
            <person name="Wawra S."/>
            <person name="Weide R."/>
            <person name="Win J."/>
            <person name="Young C."/>
            <person name="Zhou S."/>
            <person name="Fry W."/>
            <person name="Meyers B.C."/>
            <person name="van West P."/>
            <person name="Ristaino J."/>
            <person name="Govers F."/>
            <person name="Birch P.R."/>
            <person name="Whisson S.C."/>
            <person name="Judelson H.S."/>
            <person name="Nusbaum C."/>
        </authorList>
    </citation>
    <scope>NUCLEOTIDE SEQUENCE [LARGE SCALE GENOMIC DNA]</scope>
    <source>
        <strain>T30-4</strain>
    </source>
</reference>
<dbReference type="EC" id="3.1.-.-" evidence="1"/>
<dbReference type="EMBL" id="DS028121">
    <property type="protein sequence ID" value="EEY66082.1"/>
    <property type="molecule type" value="Genomic_DNA"/>
</dbReference>
<dbReference type="RefSeq" id="XP_002906681.1">
    <property type="nucleotide sequence ID" value="XM_002906635.1"/>
</dbReference>
<dbReference type="SMR" id="D0MY34"/>
<dbReference type="FunCoup" id="D0MY34">
    <property type="interactions" value="567"/>
</dbReference>
<dbReference type="STRING" id="403677.D0MY34"/>
<dbReference type="EnsemblProtists" id="PITG_03624T0">
    <property type="protein sequence ID" value="PITG_03624T0"/>
    <property type="gene ID" value="PITG_03624"/>
</dbReference>
<dbReference type="GeneID" id="9467576"/>
<dbReference type="KEGG" id="pif:PITG_03624"/>
<dbReference type="VEuPathDB" id="FungiDB:PITG_03624"/>
<dbReference type="eggNOG" id="KOG2519">
    <property type="taxonomic scope" value="Eukaryota"/>
</dbReference>
<dbReference type="HOGENOM" id="CLU_032444_2_0_1"/>
<dbReference type="InParanoid" id="D0MY34"/>
<dbReference type="OMA" id="MGIPWVQ"/>
<dbReference type="OrthoDB" id="1937206at2759"/>
<dbReference type="Proteomes" id="UP000006643">
    <property type="component" value="Partially assembled WGS sequence"/>
</dbReference>
<dbReference type="GO" id="GO:0005739">
    <property type="term" value="C:mitochondrion"/>
    <property type="evidence" value="ECO:0007669"/>
    <property type="project" value="UniProtKB-SubCell"/>
</dbReference>
<dbReference type="GO" id="GO:0005730">
    <property type="term" value="C:nucleolus"/>
    <property type="evidence" value="ECO:0007669"/>
    <property type="project" value="UniProtKB-SubCell"/>
</dbReference>
<dbReference type="GO" id="GO:0005654">
    <property type="term" value="C:nucleoplasm"/>
    <property type="evidence" value="ECO:0007669"/>
    <property type="project" value="UniProtKB-SubCell"/>
</dbReference>
<dbReference type="GO" id="GO:0008409">
    <property type="term" value="F:5'-3' exonuclease activity"/>
    <property type="evidence" value="ECO:0007669"/>
    <property type="project" value="UniProtKB-UniRule"/>
</dbReference>
<dbReference type="GO" id="GO:0017108">
    <property type="term" value="F:5'-flap endonuclease activity"/>
    <property type="evidence" value="ECO:0007669"/>
    <property type="project" value="UniProtKB-UniRule"/>
</dbReference>
<dbReference type="GO" id="GO:0003677">
    <property type="term" value="F:DNA binding"/>
    <property type="evidence" value="ECO:0007669"/>
    <property type="project" value="UniProtKB-UniRule"/>
</dbReference>
<dbReference type="GO" id="GO:0000287">
    <property type="term" value="F:magnesium ion binding"/>
    <property type="evidence" value="ECO:0007669"/>
    <property type="project" value="UniProtKB-UniRule"/>
</dbReference>
<dbReference type="GO" id="GO:0006284">
    <property type="term" value="P:base-excision repair"/>
    <property type="evidence" value="ECO:0007669"/>
    <property type="project" value="UniProtKB-UniRule"/>
</dbReference>
<dbReference type="GO" id="GO:0043137">
    <property type="term" value="P:DNA replication, removal of RNA primer"/>
    <property type="evidence" value="ECO:0007669"/>
    <property type="project" value="UniProtKB-UniRule"/>
</dbReference>
<dbReference type="CDD" id="cd09907">
    <property type="entry name" value="H3TH_FEN1-Euk"/>
    <property type="match status" value="1"/>
</dbReference>
<dbReference type="CDD" id="cd09867">
    <property type="entry name" value="PIN_FEN1"/>
    <property type="match status" value="1"/>
</dbReference>
<dbReference type="FunFam" id="1.10.150.20:FF:000009">
    <property type="entry name" value="Flap endonuclease 1"/>
    <property type="match status" value="1"/>
</dbReference>
<dbReference type="FunFam" id="3.40.50.1010:FF:000058">
    <property type="entry name" value="Flap endonuclease 1"/>
    <property type="match status" value="1"/>
</dbReference>
<dbReference type="Gene3D" id="1.10.150.20">
    <property type="entry name" value="5' to 3' exonuclease, C-terminal subdomain"/>
    <property type="match status" value="1"/>
</dbReference>
<dbReference type="Gene3D" id="3.40.50.1010">
    <property type="entry name" value="5'-nuclease"/>
    <property type="match status" value="1"/>
</dbReference>
<dbReference type="HAMAP" id="MF_00614">
    <property type="entry name" value="Fen"/>
    <property type="match status" value="1"/>
</dbReference>
<dbReference type="InterPro" id="IPR036279">
    <property type="entry name" value="5-3_exonuclease_C_sf"/>
</dbReference>
<dbReference type="InterPro" id="IPR023426">
    <property type="entry name" value="Flap_endonuc"/>
</dbReference>
<dbReference type="InterPro" id="IPR008918">
    <property type="entry name" value="HhH2"/>
</dbReference>
<dbReference type="InterPro" id="IPR029060">
    <property type="entry name" value="PIN-like_dom_sf"/>
</dbReference>
<dbReference type="InterPro" id="IPR006086">
    <property type="entry name" value="XPG-I_dom"/>
</dbReference>
<dbReference type="InterPro" id="IPR006084">
    <property type="entry name" value="XPG/Rad2"/>
</dbReference>
<dbReference type="InterPro" id="IPR019974">
    <property type="entry name" value="XPG_CS"/>
</dbReference>
<dbReference type="InterPro" id="IPR006085">
    <property type="entry name" value="XPG_DNA_repair_N"/>
</dbReference>
<dbReference type="PANTHER" id="PTHR11081:SF9">
    <property type="entry name" value="FLAP ENDONUCLEASE 1"/>
    <property type="match status" value="1"/>
</dbReference>
<dbReference type="PANTHER" id="PTHR11081">
    <property type="entry name" value="FLAP ENDONUCLEASE FAMILY MEMBER"/>
    <property type="match status" value="1"/>
</dbReference>
<dbReference type="Pfam" id="PF00867">
    <property type="entry name" value="XPG_I"/>
    <property type="match status" value="1"/>
</dbReference>
<dbReference type="Pfam" id="PF00752">
    <property type="entry name" value="XPG_N"/>
    <property type="match status" value="1"/>
</dbReference>
<dbReference type="PRINTS" id="PR00853">
    <property type="entry name" value="XPGRADSUPER"/>
</dbReference>
<dbReference type="SMART" id="SM00279">
    <property type="entry name" value="HhH2"/>
    <property type="match status" value="1"/>
</dbReference>
<dbReference type="SMART" id="SM00484">
    <property type="entry name" value="XPGI"/>
    <property type="match status" value="1"/>
</dbReference>
<dbReference type="SMART" id="SM00485">
    <property type="entry name" value="XPGN"/>
    <property type="match status" value="1"/>
</dbReference>
<dbReference type="SUPFAM" id="SSF47807">
    <property type="entry name" value="5' to 3' exonuclease, C-terminal subdomain"/>
    <property type="match status" value="1"/>
</dbReference>
<dbReference type="SUPFAM" id="SSF88723">
    <property type="entry name" value="PIN domain-like"/>
    <property type="match status" value="1"/>
</dbReference>
<dbReference type="PROSITE" id="PS00841">
    <property type="entry name" value="XPG_1"/>
    <property type="match status" value="1"/>
</dbReference>
<sequence length="389" mass="43017">MGIKGLMKLLQEEAPSCIKEVEKMSALAGHAVAIDASMALYQFLIAIRSADGGGPSQALTNADGEVTSHLQGMFSRTIRMMENGLKPVYVFDGKPPVMKSGELAKRSDRRQEAQKALEEATEKGNAEDIDRFNKRLVRATPQHNEDCKELLRLMGVPHITAPCEAEASCAALAKGGRVYAAGTEDMDALTFGVPVLYRRLTVSPAKKIPILEIRLERALQELEMTHEQFVDLCILCGCDYCDSIRGVGPKKAYAGIKEHKSIENFLEVLQKNKSKGVVIPDEWLGENPIYKNAREMFIKPEVVDAKETEIKWRDPQETELVDFLVKKHGFQEDRVLSAITRLKKSKSTQSQKRLDSFFTVMPSANGAKKRKAPAAKGGKKAATAKKGKK</sequence>
<accession>D0MY34</accession>